<proteinExistence type="evidence at protein level"/>
<keyword id="KW-0158">Chromosome</keyword>
<keyword id="KW-0903">Direct protein sequencing</keyword>
<keyword id="KW-0238">DNA-binding</keyword>
<keyword id="KW-0539">Nucleus</keyword>
<keyword id="KW-1185">Reference proteome</keyword>
<sequence>PASPQKRAASPRRSPKKSPRKSPKKSPRKRSASP</sequence>
<name>H1S_STRPU</name>
<accession>P19376</accession>
<protein>
    <recommendedName>
        <fullName>Histone H1, sperm</fullName>
    </recommendedName>
</protein>
<comment type="function">
    <text>Histones H1 are necessary for the condensation of nucleosome chains into higher-order structures.</text>
</comment>
<comment type="subcellular location">
    <subcellularLocation>
        <location>Nucleus</location>
    </subcellularLocation>
    <subcellularLocation>
        <location>Chromosome</location>
    </subcellularLocation>
</comment>
<comment type="tissue specificity">
    <text>Sperm.</text>
</comment>
<comment type="similarity">
    <text evidence="2">Belongs to the histone H1/H5 family.</text>
</comment>
<feature type="chain" id="PRO_0000195948" description="Histone H1, sperm">
    <location>
        <begin position="1"/>
        <end position="34" status="greater than"/>
    </location>
</feature>
<feature type="region of interest" description="Disordered" evidence="1">
    <location>
        <begin position="1"/>
        <end position="34"/>
    </location>
</feature>
<feature type="compositionally biased region" description="Basic residues" evidence="1">
    <location>
        <begin position="9"/>
        <end position="34"/>
    </location>
</feature>
<feature type="non-terminal residue">
    <location>
        <position position="34"/>
    </location>
</feature>
<organism>
    <name type="scientific">Strongylocentrotus purpuratus</name>
    <name type="common">Purple sea urchin</name>
    <dbReference type="NCBI Taxonomy" id="7668"/>
    <lineage>
        <taxon>Eukaryota</taxon>
        <taxon>Metazoa</taxon>
        <taxon>Echinodermata</taxon>
        <taxon>Eleutherozoa</taxon>
        <taxon>Echinozoa</taxon>
        <taxon>Echinoidea</taxon>
        <taxon>Euechinoidea</taxon>
        <taxon>Echinacea</taxon>
        <taxon>Camarodonta</taxon>
        <taxon>Echinidea</taxon>
        <taxon>Strongylocentrotidae</taxon>
        <taxon>Strongylocentrotus</taxon>
    </lineage>
</organism>
<evidence type="ECO:0000256" key="1">
    <source>
        <dbReference type="SAM" id="MobiDB-lite"/>
    </source>
</evidence>
<evidence type="ECO:0000305" key="2"/>
<reference key="1">
    <citation type="journal article" date="1989" name="Comp. Biochem. Physiol.">
        <title>The amino terminal sequence of sea urchin sperm histone H1 and its phosphorylation by egg cytosol.</title>
        <authorList>
            <person name="Porter D.C."/>
            <person name="Moy G.W."/>
            <person name="Vacquier V.D."/>
        </authorList>
    </citation>
    <scope>PROTEIN SEQUENCE</scope>
</reference>
<dbReference type="eggNOG" id="KOG4012">
    <property type="taxonomic scope" value="Eukaryota"/>
</dbReference>
<dbReference type="HOGENOM" id="CLU_052897_1_2_1"/>
<dbReference type="InParanoid" id="P19376"/>
<dbReference type="Proteomes" id="UP000007110">
    <property type="component" value="Unassembled WGS sequence"/>
</dbReference>
<dbReference type="GO" id="GO:0005694">
    <property type="term" value="C:chromosome"/>
    <property type="evidence" value="ECO:0007669"/>
    <property type="project" value="UniProtKB-SubCell"/>
</dbReference>
<dbReference type="GO" id="GO:0005634">
    <property type="term" value="C:nucleus"/>
    <property type="evidence" value="ECO:0007669"/>
    <property type="project" value="UniProtKB-SubCell"/>
</dbReference>
<dbReference type="GO" id="GO:0003677">
    <property type="term" value="F:DNA binding"/>
    <property type="evidence" value="ECO:0007669"/>
    <property type="project" value="UniProtKB-KW"/>
</dbReference>